<organism>
    <name type="scientific">Escherichia coli (strain K12)</name>
    <dbReference type="NCBI Taxonomy" id="83333"/>
    <lineage>
        <taxon>Bacteria</taxon>
        <taxon>Pseudomonadati</taxon>
        <taxon>Pseudomonadota</taxon>
        <taxon>Gammaproteobacteria</taxon>
        <taxon>Enterobacterales</taxon>
        <taxon>Enterobacteriaceae</taxon>
        <taxon>Escherichia</taxon>
    </lineage>
</organism>
<accession>P45531</accession>
<accession>Q2M709</accession>
<sequence>MKRIAFVFSTAPHGTAAGREGLDALLATSALTDDLAVFFIADGVFQLLPGQKPDAVLARDYIATFKLLGLYDIEQCWVCAASLRERGLDPQTPFVVEATPLEADALRRELANYDVILRF</sequence>
<reference key="1">
    <citation type="journal article" date="1997" name="Science">
        <title>The complete genome sequence of Escherichia coli K-12.</title>
        <authorList>
            <person name="Blattner F.R."/>
            <person name="Plunkett G. III"/>
            <person name="Bloch C.A."/>
            <person name="Perna N.T."/>
            <person name="Burland V."/>
            <person name="Riley M."/>
            <person name="Collado-Vides J."/>
            <person name="Glasner J.D."/>
            <person name="Rode C.K."/>
            <person name="Mayhew G.F."/>
            <person name="Gregor J."/>
            <person name="Davis N.W."/>
            <person name="Kirkpatrick H.A."/>
            <person name="Goeden M.A."/>
            <person name="Rose D.J."/>
            <person name="Mau B."/>
            <person name="Shao Y."/>
        </authorList>
    </citation>
    <scope>NUCLEOTIDE SEQUENCE [LARGE SCALE GENOMIC DNA]</scope>
    <source>
        <strain>K12 / MG1655 / ATCC 47076</strain>
    </source>
</reference>
<reference key="2">
    <citation type="journal article" date="2006" name="Mol. Syst. Biol.">
        <title>Highly accurate genome sequences of Escherichia coli K-12 strains MG1655 and W3110.</title>
        <authorList>
            <person name="Hayashi K."/>
            <person name="Morooka N."/>
            <person name="Yamamoto Y."/>
            <person name="Fujita K."/>
            <person name="Isono K."/>
            <person name="Choi S."/>
            <person name="Ohtsubo E."/>
            <person name="Baba T."/>
            <person name="Wanner B.L."/>
            <person name="Mori H."/>
            <person name="Horiuchi T."/>
        </authorList>
    </citation>
    <scope>NUCLEOTIDE SEQUENCE [LARGE SCALE GENOMIC DNA]</scope>
    <source>
        <strain>K12 / W3110 / ATCC 27325 / DSM 5911</strain>
    </source>
</reference>
<reference key="3">
    <citation type="journal article" date="2006" name="Mol. Cell">
        <title>Mechanistic insights into sulfur relay by multiple sulfur mediators involved in thiouridine biosynthesis at tRNA wobble positions.</title>
        <authorList>
            <person name="Ikeuchi Y."/>
            <person name="Shigi N."/>
            <person name="Kato J."/>
            <person name="Nishimura A."/>
            <person name="Suzuki T."/>
        </authorList>
    </citation>
    <scope>FUNCTION</scope>
    <scope>SUBUNIT</scope>
</reference>
<reference key="4">
    <citation type="journal article" date="2006" name="Structure">
        <title>Structural basis for sulfur relay to RNA mediated by heterohexameric TusBCD complex.</title>
        <authorList>
            <person name="Numata T."/>
            <person name="Fukai S."/>
            <person name="Ikeuchi Y."/>
            <person name="Suzuki T."/>
            <person name="Nureki O."/>
        </authorList>
    </citation>
    <scope>X-RAY CRYSTALLOGRAPHY (2.15 ANGSTROMS)</scope>
    <scope>MUTAGENESIS OF CYS-76 AND CYS-79</scope>
    <scope>SUBUNIT</scope>
</reference>
<gene>
    <name type="primary">tusC</name>
    <name type="synonym">yheM</name>
    <name type="ordered locus">b3344</name>
    <name type="ordered locus">JW3306</name>
</gene>
<evidence type="ECO:0000269" key="1">
    <source>
    </source>
</evidence>
<evidence type="ECO:0000269" key="2">
    <source>
    </source>
</evidence>
<evidence type="ECO:0000305" key="3"/>
<evidence type="ECO:0007829" key="4">
    <source>
        <dbReference type="PDB" id="2D1P"/>
    </source>
</evidence>
<dbReference type="EMBL" id="U18997">
    <property type="protein sequence ID" value="AAA58141.1"/>
    <property type="molecule type" value="Genomic_DNA"/>
</dbReference>
<dbReference type="EMBL" id="U00096">
    <property type="protein sequence ID" value="AAC76369.1"/>
    <property type="molecule type" value="Genomic_DNA"/>
</dbReference>
<dbReference type="EMBL" id="AP009048">
    <property type="protein sequence ID" value="BAE77947.1"/>
    <property type="molecule type" value="Genomic_DNA"/>
</dbReference>
<dbReference type="PIR" id="C65128">
    <property type="entry name" value="C65128"/>
</dbReference>
<dbReference type="RefSeq" id="NP_417803.1">
    <property type="nucleotide sequence ID" value="NC_000913.3"/>
</dbReference>
<dbReference type="RefSeq" id="WP_000820714.1">
    <property type="nucleotide sequence ID" value="NZ_SSZK01000008.1"/>
</dbReference>
<dbReference type="PDB" id="2D1P">
    <property type="method" value="X-ray"/>
    <property type="resolution" value="2.15 A"/>
    <property type="chains" value="B/E/H=1-119"/>
</dbReference>
<dbReference type="PDBsum" id="2D1P"/>
<dbReference type="SMR" id="P45531"/>
<dbReference type="BioGRID" id="4262468">
    <property type="interactions" value="31"/>
</dbReference>
<dbReference type="ComplexPortal" id="CPX-2144">
    <property type="entry name" value="TusBCDE complex"/>
</dbReference>
<dbReference type="DIP" id="DIP-12309N"/>
<dbReference type="FunCoup" id="P45531">
    <property type="interactions" value="112"/>
</dbReference>
<dbReference type="IntAct" id="P45531">
    <property type="interactions" value="7"/>
</dbReference>
<dbReference type="STRING" id="511145.b3344"/>
<dbReference type="PaxDb" id="511145-b3344"/>
<dbReference type="EnsemblBacteria" id="AAC76369">
    <property type="protein sequence ID" value="AAC76369"/>
    <property type="gene ID" value="b3344"/>
</dbReference>
<dbReference type="GeneID" id="93778654"/>
<dbReference type="GeneID" id="947853"/>
<dbReference type="KEGG" id="ecj:JW3306"/>
<dbReference type="KEGG" id="eco:b3344"/>
<dbReference type="KEGG" id="ecoc:C3026_18160"/>
<dbReference type="PATRIC" id="fig|1411691.4.peg.3387"/>
<dbReference type="EchoBASE" id="EB2734"/>
<dbReference type="eggNOG" id="COG2923">
    <property type="taxonomic scope" value="Bacteria"/>
</dbReference>
<dbReference type="HOGENOM" id="CLU_155943_1_0_6"/>
<dbReference type="InParanoid" id="P45531"/>
<dbReference type="OMA" id="EMILIMA"/>
<dbReference type="OrthoDB" id="9789418at2"/>
<dbReference type="PhylomeDB" id="P45531"/>
<dbReference type="BioCyc" id="EcoCyc:G7713-MONOMER"/>
<dbReference type="BioCyc" id="MetaCyc:G7713-MONOMER"/>
<dbReference type="EvolutionaryTrace" id="P45531"/>
<dbReference type="PRO" id="PR:P45531"/>
<dbReference type="Proteomes" id="UP000000625">
    <property type="component" value="Chromosome"/>
</dbReference>
<dbReference type="GO" id="GO:1990228">
    <property type="term" value="C:sulfurtransferase complex"/>
    <property type="evidence" value="ECO:0000314"/>
    <property type="project" value="EcoCyc"/>
</dbReference>
<dbReference type="GO" id="GO:0002143">
    <property type="term" value="P:tRNA wobble position uridine thiolation"/>
    <property type="evidence" value="ECO:0000314"/>
    <property type="project" value="ComplexPortal"/>
</dbReference>
<dbReference type="FunFam" id="3.40.1260.10:FF:000004">
    <property type="entry name" value="Sulfurtransferase TusC"/>
    <property type="match status" value="1"/>
</dbReference>
<dbReference type="Gene3D" id="3.40.1260.10">
    <property type="entry name" value="DsrEFH-like"/>
    <property type="match status" value="1"/>
</dbReference>
<dbReference type="HAMAP" id="MF_00389">
    <property type="entry name" value="Thiourid_synth_C"/>
    <property type="match status" value="1"/>
</dbReference>
<dbReference type="InterPro" id="IPR027396">
    <property type="entry name" value="DsrEFH-like"/>
</dbReference>
<dbReference type="InterPro" id="IPR003787">
    <property type="entry name" value="Sulphur_relay_DsrE/F-like"/>
</dbReference>
<dbReference type="InterPro" id="IPR037450">
    <property type="entry name" value="Sulphur_relay_TusC"/>
</dbReference>
<dbReference type="InterPro" id="IPR017462">
    <property type="entry name" value="Sulphur_relay_TusC/DsrF"/>
</dbReference>
<dbReference type="NCBIfam" id="NF001238">
    <property type="entry name" value="PRK00211.1"/>
    <property type="match status" value="1"/>
</dbReference>
<dbReference type="NCBIfam" id="TIGR03010">
    <property type="entry name" value="sulf_tusC_dsrF"/>
    <property type="match status" value="1"/>
</dbReference>
<dbReference type="PANTHER" id="PTHR38780">
    <property type="entry name" value="PROTEIN TUSC"/>
    <property type="match status" value="1"/>
</dbReference>
<dbReference type="PANTHER" id="PTHR38780:SF1">
    <property type="entry name" value="PROTEIN TUSC"/>
    <property type="match status" value="1"/>
</dbReference>
<dbReference type="Pfam" id="PF02635">
    <property type="entry name" value="DsrE"/>
    <property type="match status" value="1"/>
</dbReference>
<dbReference type="SUPFAM" id="SSF75169">
    <property type="entry name" value="DsrEFH-like"/>
    <property type="match status" value="1"/>
</dbReference>
<protein>
    <recommendedName>
        <fullName>Protein TusC</fullName>
    </recommendedName>
    <alternativeName>
        <fullName>tRNA 2-thiouridine synthesizing protein C</fullName>
    </alternativeName>
</protein>
<name>TUSC_ECOLI</name>
<feature type="chain" id="PRO_0000214883" description="Protein TusC">
    <location>
        <begin position="1"/>
        <end position="119"/>
    </location>
</feature>
<feature type="mutagenesis site" description="No effect." evidence="2">
    <original>C</original>
    <variation>S</variation>
    <location>
        <position position="76"/>
    </location>
</feature>
<feature type="mutagenesis site" description="No effect." evidence="2">
    <original>C</original>
    <variation>S</variation>
    <location>
        <position position="79"/>
    </location>
</feature>
<feature type="strand" evidence="4">
    <location>
        <begin position="4"/>
        <end position="8"/>
    </location>
</feature>
<feature type="turn" evidence="4">
    <location>
        <begin position="12"/>
        <end position="14"/>
    </location>
</feature>
<feature type="helix" evidence="4">
    <location>
        <begin position="17"/>
        <end position="29"/>
    </location>
</feature>
<feature type="strand" evidence="4">
    <location>
        <begin position="35"/>
        <end position="39"/>
    </location>
</feature>
<feature type="helix" evidence="4">
    <location>
        <begin position="41"/>
        <end position="47"/>
    </location>
</feature>
<feature type="helix" evidence="4">
    <location>
        <begin position="53"/>
        <end position="56"/>
    </location>
</feature>
<feature type="helix" evidence="4">
    <location>
        <begin position="62"/>
        <end position="65"/>
    </location>
</feature>
<feature type="helix" evidence="4">
    <location>
        <begin position="66"/>
        <end position="70"/>
    </location>
</feature>
<feature type="strand" evidence="4">
    <location>
        <begin position="76"/>
        <end position="79"/>
    </location>
</feature>
<feature type="helix" evidence="4">
    <location>
        <begin position="80"/>
        <end position="85"/>
    </location>
</feature>
<feature type="strand" evidence="4">
    <location>
        <begin position="99"/>
        <end position="101"/>
    </location>
</feature>
<feature type="helix" evidence="4">
    <location>
        <begin position="103"/>
        <end position="110"/>
    </location>
</feature>
<feature type="strand" evidence="4">
    <location>
        <begin position="114"/>
        <end position="119"/>
    </location>
</feature>
<proteinExistence type="evidence at protein level"/>
<keyword id="KW-0002">3D-structure</keyword>
<keyword id="KW-0963">Cytoplasm</keyword>
<keyword id="KW-1185">Reference proteome</keyword>
<keyword id="KW-0819">tRNA processing</keyword>
<comment type="function">
    <text evidence="1">Part of a sulfur-relay system required for 2-thiolation of 5-methylaminomethyl-2-thiouridine (mnm(5)s(2)U) at tRNA wobble positions.</text>
</comment>
<comment type="subunit">
    <text evidence="1 2">Heterohexamer, formed by a dimer of trimers. The hexameric TusBCD complex contains 2 copies each of TusB, TusC and TusD. The TusBCD complex interacts with TusE.</text>
</comment>
<comment type="subcellular location">
    <subcellularLocation>
        <location evidence="3">Cytoplasm</location>
    </subcellularLocation>
</comment>
<comment type="similarity">
    <text evidence="3">Belongs to the DsrF/TusC family.</text>
</comment>